<gene>
    <name evidence="1" type="primary">rpoC</name>
    <name type="ordered locus">CTLon_0562</name>
</gene>
<reference key="1">
    <citation type="journal article" date="2008" name="Genome Res.">
        <title>Chlamydia trachomatis: genome sequence analysis of lymphogranuloma venereum isolates.</title>
        <authorList>
            <person name="Thomson N.R."/>
            <person name="Holden M.T.G."/>
            <person name="Carder C."/>
            <person name="Lennard N."/>
            <person name="Lockey S.J."/>
            <person name="Marsh P."/>
            <person name="Skipp P."/>
            <person name="O'Connor C.D."/>
            <person name="Goodhead I."/>
            <person name="Norbertzcak H."/>
            <person name="Harris B."/>
            <person name="Ormond D."/>
            <person name="Rance R."/>
            <person name="Quail M.A."/>
            <person name="Parkhill J."/>
            <person name="Stephens R.S."/>
            <person name="Clarke I.N."/>
        </authorList>
    </citation>
    <scope>NUCLEOTIDE SEQUENCE [LARGE SCALE GENOMIC DNA]</scope>
    <source>
        <strain>UCH-1/proctitis</strain>
    </source>
</reference>
<feature type="chain" id="PRO_1000141765" description="DNA-directed RNA polymerase subunit beta'">
    <location>
        <begin position="1"/>
        <end position="1396"/>
    </location>
</feature>
<feature type="binding site" evidence="1">
    <location>
        <position position="72"/>
    </location>
    <ligand>
        <name>Zn(2+)</name>
        <dbReference type="ChEBI" id="CHEBI:29105"/>
        <label>1</label>
    </ligand>
</feature>
<feature type="binding site" evidence="1">
    <location>
        <position position="74"/>
    </location>
    <ligand>
        <name>Zn(2+)</name>
        <dbReference type="ChEBI" id="CHEBI:29105"/>
        <label>1</label>
    </ligand>
</feature>
<feature type="binding site" evidence="1">
    <location>
        <position position="87"/>
    </location>
    <ligand>
        <name>Zn(2+)</name>
        <dbReference type="ChEBI" id="CHEBI:29105"/>
        <label>1</label>
    </ligand>
</feature>
<feature type="binding site" evidence="1">
    <location>
        <position position="90"/>
    </location>
    <ligand>
        <name>Zn(2+)</name>
        <dbReference type="ChEBI" id="CHEBI:29105"/>
        <label>1</label>
    </ligand>
</feature>
<feature type="binding site" evidence="1">
    <location>
        <position position="463"/>
    </location>
    <ligand>
        <name>Mg(2+)</name>
        <dbReference type="ChEBI" id="CHEBI:18420"/>
    </ligand>
</feature>
<feature type="binding site" evidence="1">
    <location>
        <position position="465"/>
    </location>
    <ligand>
        <name>Mg(2+)</name>
        <dbReference type="ChEBI" id="CHEBI:18420"/>
    </ligand>
</feature>
<feature type="binding site" evidence="1">
    <location>
        <position position="467"/>
    </location>
    <ligand>
        <name>Mg(2+)</name>
        <dbReference type="ChEBI" id="CHEBI:18420"/>
    </ligand>
</feature>
<feature type="binding site" evidence="1">
    <location>
        <position position="814"/>
    </location>
    <ligand>
        <name>Zn(2+)</name>
        <dbReference type="ChEBI" id="CHEBI:29105"/>
        <label>2</label>
    </ligand>
</feature>
<feature type="binding site" evidence="1">
    <location>
        <position position="889"/>
    </location>
    <ligand>
        <name>Zn(2+)</name>
        <dbReference type="ChEBI" id="CHEBI:29105"/>
        <label>2</label>
    </ligand>
</feature>
<feature type="binding site" evidence="1">
    <location>
        <position position="896"/>
    </location>
    <ligand>
        <name>Zn(2+)</name>
        <dbReference type="ChEBI" id="CHEBI:29105"/>
        <label>2</label>
    </ligand>
</feature>
<feature type="binding site" evidence="1">
    <location>
        <position position="899"/>
    </location>
    <ligand>
        <name>Zn(2+)</name>
        <dbReference type="ChEBI" id="CHEBI:29105"/>
        <label>2</label>
    </ligand>
</feature>
<organism>
    <name type="scientific">Chlamydia trachomatis serovar L2b (strain UCH-1/proctitis)</name>
    <dbReference type="NCBI Taxonomy" id="471473"/>
    <lineage>
        <taxon>Bacteria</taxon>
        <taxon>Pseudomonadati</taxon>
        <taxon>Chlamydiota</taxon>
        <taxon>Chlamydiia</taxon>
        <taxon>Chlamydiales</taxon>
        <taxon>Chlamydiaceae</taxon>
        <taxon>Chlamydia/Chlamydophila group</taxon>
        <taxon>Chlamydia</taxon>
    </lineage>
</organism>
<sequence length="1396" mass="154840">MFREGSRDDAALVKEGLFDKLEIGIASDVTIRDKWSCGEIKKPETINYRTFKPEKGGLFCEKIFGPTKDWECYCGKYKKIKHKGIVCDRCGVEVTLSKVRRERMAHIELAVPIVHIWFFKTTPSRIGNVLGMTASDLERVIYYEEYVVIDPGNTDLVKKQLLNDAKYREVVEKWGKDAFVAKMGGEAVYDLLKSEDLESLLGELKDRLRKTKSQQARMKLAKRLKIVEGFVSSSNRPEWMVLKNIPVVPPDLRPLVPLDGGRFATSDLNDLYRRVINRNNRLKAILRLKTPEVIVRNEKRMLQEAVDALFDNGRHGHPVMGAGNRPLKSLSEMLKGKNGRFRQNLLGKRVDYSGRSVIIVGPELKFNQCGLPKEMALELFEPFIIKRLKDQGSVYTIRSAKKMIQRGAPEVWDVLEEIIKGHPVLLNRAPTLHRLGIQAFEPVLIEGKAIRVHPLVCAAFNADFDGDQMAVHVPLSIEAQLEAKVLMMAPDNIFLPSSGKPVATPSKDMTLGIYYLMADPTYFPEEHGGKTKAFKDEVEVLRALNAGGFILKDEICGSRRDETGRGIHIHEKIKVRIDGQIIETTPGRVFFNTIVPKELGFQNYSMPSKRISELILQCYKKVGLEATVRFLDDLKELGFVQSTKAAISMGLKDVKIPEIKKEILKDAYDKVAIVKKQYEDGIITDGERHSKTISIWTEVSDLLSNALYSEIKKQTNSKHNPLFLMVDSGARGNKSQLKQLGALRGLMAKPNGAIIESPITSNFREGLTVLEYSISSHGARKGLADTALKTADSGYLTRRLVDVAQDVIITERDCGTLNHIEVSTIRQGSEELLPLKDRVYGRTVSENIYQPGDKSNVLAYAGDVLTSAQAEAIDDAGIESVKIRSTLTCESRRGVCAKCYGLNLANGHLIGLGEAVGIIAAQSIGEPGTQLTMRTFHLGGVAATSSTPEIVAECDGILVYLDLRVVVDQEGNNLVLNKMGALHLVQDEGRSLSEYKKLLSTKSIESLATFPVELGAKILVNDGAAVTAGQRIAEVELHNIPIICDKPGFVHYEDLVEGVSTEKVANKNTGLVELIVKQHRGELHPQIAIYADANMKELVGTYAIPSGAIISVEEGQRIAPGMLLARLPRGAIKTKDITGGLPRVAELVEARKPEDAADIAKIDGVVDFKGIQKNKRILVVRDEITGMEEEHLISLTKHLIVQRGDSVIKGQQLTDGLVVPHEILAICGVRELQKYLVNEVQEVYRLQGVDINDKHIEIIVRQMLQKVRITDPGDTTLLFGEDVDKKEFYEENRRTEEDGGKPAQAVPVLLGITKASLGTESFISAASFQDTTRVLTDAACSSKTDYLLGFKENVIMGHMIPGGTGFDTHKRIKQYLEKEQEDLVFDFDSEFESVAG</sequence>
<accession>B0BBU5</accession>
<dbReference type="EC" id="2.7.7.6" evidence="1"/>
<dbReference type="EMBL" id="AM884177">
    <property type="protein sequence ID" value="CAP06960.1"/>
    <property type="molecule type" value="Genomic_DNA"/>
</dbReference>
<dbReference type="RefSeq" id="WP_012263638.1">
    <property type="nucleotide sequence ID" value="NC_010280.2"/>
</dbReference>
<dbReference type="SMR" id="B0BBU5"/>
<dbReference type="KEGG" id="ctl:CTLon_0562"/>
<dbReference type="HOGENOM" id="CLU_000524_3_1_0"/>
<dbReference type="Proteomes" id="UP001154401">
    <property type="component" value="Chromosome"/>
</dbReference>
<dbReference type="GO" id="GO:0000428">
    <property type="term" value="C:DNA-directed RNA polymerase complex"/>
    <property type="evidence" value="ECO:0007669"/>
    <property type="project" value="UniProtKB-KW"/>
</dbReference>
<dbReference type="GO" id="GO:0003677">
    <property type="term" value="F:DNA binding"/>
    <property type="evidence" value="ECO:0007669"/>
    <property type="project" value="UniProtKB-UniRule"/>
</dbReference>
<dbReference type="GO" id="GO:0003899">
    <property type="term" value="F:DNA-directed RNA polymerase activity"/>
    <property type="evidence" value="ECO:0007669"/>
    <property type="project" value="UniProtKB-UniRule"/>
</dbReference>
<dbReference type="GO" id="GO:0000287">
    <property type="term" value="F:magnesium ion binding"/>
    <property type="evidence" value="ECO:0007669"/>
    <property type="project" value="UniProtKB-UniRule"/>
</dbReference>
<dbReference type="GO" id="GO:0008270">
    <property type="term" value="F:zinc ion binding"/>
    <property type="evidence" value="ECO:0007669"/>
    <property type="project" value="UniProtKB-UniRule"/>
</dbReference>
<dbReference type="GO" id="GO:0006351">
    <property type="term" value="P:DNA-templated transcription"/>
    <property type="evidence" value="ECO:0007669"/>
    <property type="project" value="UniProtKB-UniRule"/>
</dbReference>
<dbReference type="CDD" id="cd02655">
    <property type="entry name" value="RNAP_beta'_C"/>
    <property type="match status" value="1"/>
</dbReference>
<dbReference type="CDD" id="cd01609">
    <property type="entry name" value="RNAP_beta'_N"/>
    <property type="match status" value="1"/>
</dbReference>
<dbReference type="Gene3D" id="1.10.132.30">
    <property type="match status" value="1"/>
</dbReference>
<dbReference type="Gene3D" id="1.10.150.390">
    <property type="match status" value="1"/>
</dbReference>
<dbReference type="Gene3D" id="1.10.1790.20">
    <property type="match status" value="1"/>
</dbReference>
<dbReference type="Gene3D" id="1.10.40.90">
    <property type="match status" value="1"/>
</dbReference>
<dbReference type="Gene3D" id="2.40.40.20">
    <property type="match status" value="1"/>
</dbReference>
<dbReference type="Gene3D" id="2.40.50.100">
    <property type="match status" value="3"/>
</dbReference>
<dbReference type="Gene3D" id="4.10.860.120">
    <property type="entry name" value="RNA polymerase II, clamp domain"/>
    <property type="match status" value="1"/>
</dbReference>
<dbReference type="Gene3D" id="1.10.274.100">
    <property type="entry name" value="RNA polymerase Rpb1, domain 3"/>
    <property type="match status" value="1"/>
</dbReference>
<dbReference type="HAMAP" id="MF_01322">
    <property type="entry name" value="RNApol_bact_RpoC"/>
    <property type="match status" value="1"/>
</dbReference>
<dbReference type="InterPro" id="IPR045867">
    <property type="entry name" value="DNA-dir_RpoC_beta_prime"/>
</dbReference>
<dbReference type="InterPro" id="IPR012754">
    <property type="entry name" value="DNA-dir_RpoC_beta_prime_bact"/>
</dbReference>
<dbReference type="InterPro" id="IPR000722">
    <property type="entry name" value="RNA_pol_asu"/>
</dbReference>
<dbReference type="InterPro" id="IPR006592">
    <property type="entry name" value="RNA_pol_N"/>
</dbReference>
<dbReference type="InterPro" id="IPR007080">
    <property type="entry name" value="RNA_pol_Rpb1_1"/>
</dbReference>
<dbReference type="InterPro" id="IPR007066">
    <property type="entry name" value="RNA_pol_Rpb1_3"/>
</dbReference>
<dbReference type="InterPro" id="IPR042102">
    <property type="entry name" value="RNA_pol_Rpb1_3_sf"/>
</dbReference>
<dbReference type="InterPro" id="IPR007083">
    <property type="entry name" value="RNA_pol_Rpb1_4"/>
</dbReference>
<dbReference type="InterPro" id="IPR007081">
    <property type="entry name" value="RNA_pol_Rpb1_5"/>
</dbReference>
<dbReference type="InterPro" id="IPR044893">
    <property type="entry name" value="RNA_pol_Rpb1_clamp_domain"/>
</dbReference>
<dbReference type="InterPro" id="IPR038120">
    <property type="entry name" value="Rpb1_funnel_sf"/>
</dbReference>
<dbReference type="NCBIfam" id="TIGR02386">
    <property type="entry name" value="rpoC_TIGR"/>
    <property type="match status" value="1"/>
</dbReference>
<dbReference type="PANTHER" id="PTHR19376">
    <property type="entry name" value="DNA-DIRECTED RNA POLYMERASE"/>
    <property type="match status" value="1"/>
</dbReference>
<dbReference type="PANTHER" id="PTHR19376:SF54">
    <property type="entry name" value="DNA-DIRECTED RNA POLYMERASE SUBUNIT BETA"/>
    <property type="match status" value="1"/>
</dbReference>
<dbReference type="Pfam" id="PF04997">
    <property type="entry name" value="RNA_pol_Rpb1_1"/>
    <property type="match status" value="1"/>
</dbReference>
<dbReference type="Pfam" id="PF00623">
    <property type="entry name" value="RNA_pol_Rpb1_2"/>
    <property type="match status" value="1"/>
</dbReference>
<dbReference type="Pfam" id="PF04983">
    <property type="entry name" value="RNA_pol_Rpb1_3"/>
    <property type="match status" value="1"/>
</dbReference>
<dbReference type="Pfam" id="PF05000">
    <property type="entry name" value="RNA_pol_Rpb1_4"/>
    <property type="match status" value="1"/>
</dbReference>
<dbReference type="Pfam" id="PF04998">
    <property type="entry name" value="RNA_pol_Rpb1_5"/>
    <property type="match status" value="1"/>
</dbReference>
<dbReference type="SMART" id="SM00663">
    <property type="entry name" value="RPOLA_N"/>
    <property type="match status" value="1"/>
</dbReference>
<dbReference type="SUPFAM" id="SSF64484">
    <property type="entry name" value="beta and beta-prime subunits of DNA dependent RNA-polymerase"/>
    <property type="match status" value="1"/>
</dbReference>
<keyword id="KW-0240">DNA-directed RNA polymerase</keyword>
<keyword id="KW-0460">Magnesium</keyword>
<keyword id="KW-0479">Metal-binding</keyword>
<keyword id="KW-0548">Nucleotidyltransferase</keyword>
<keyword id="KW-0804">Transcription</keyword>
<keyword id="KW-0808">Transferase</keyword>
<keyword id="KW-0862">Zinc</keyword>
<protein>
    <recommendedName>
        <fullName evidence="1">DNA-directed RNA polymerase subunit beta'</fullName>
        <shortName evidence="1">RNAP subunit beta'</shortName>
        <ecNumber evidence="1">2.7.7.6</ecNumber>
    </recommendedName>
    <alternativeName>
        <fullName evidence="1">RNA polymerase subunit beta'</fullName>
    </alternativeName>
    <alternativeName>
        <fullName evidence="1">Transcriptase subunit beta'</fullName>
    </alternativeName>
</protein>
<proteinExistence type="inferred from homology"/>
<name>RPOC_CHLTB</name>
<comment type="function">
    <text evidence="1">DNA-dependent RNA polymerase catalyzes the transcription of DNA into RNA using the four ribonucleoside triphosphates as substrates.</text>
</comment>
<comment type="catalytic activity">
    <reaction evidence="1">
        <text>RNA(n) + a ribonucleoside 5'-triphosphate = RNA(n+1) + diphosphate</text>
        <dbReference type="Rhea" id="RHEA:21248"/>
        <dbReference type="Rhea" id="RHEA-COMP:14527"/>
        <dbReference type="Rhea" id="RHEA-COMP:17342"/>
        <dbReference type="ChEBI" id="CHEBI:33019"/>
        <dbReference type="ChEBI" id="CHEBI:61557"/>
        <dbReference type="ChEBI" id="CHEBI:140395"/>
        <dbReference type="EC" id="2.7.7.6"/>
    </reaction>
</comment>
<comment type="cofactor">
    <cofactor evidence="1">
        <name>Mg(2+)</name>
        <dbReference type="ChEBI" id="CHEBI:18420"/>
    </cofactor>
    <text evidence="1">Binds 1 Mg(2+) ion per subunit.</text>
</comment>
<comment type="cofactor">
    <cofactor evidence="1">
        <name>Zn(2+)</name>
        <dbReference type="ChEBI" id="CHEBI:29105"/>
    </cofactor>
    <text evidence="1">Binds 2 Zn(2+) ions per subunit.</text>
</comment>
<comment type="subunit">
    <text evidence="1">The RNAP catalytic core consists of 2 alpha, 1 beta, 1 beta' and 1 omega subunit. When a sigma factor is associated with the core the holoenzyme is formed, which can initiate transcription.</text>
</comment>
<comment type="similarity">
    <text evidence="1">Belongs to the RNA polymerase beta' chain family.</text>
</comment>
<evidence type="ECO:0000255" key="1">
    <source>
        <dbReference type="HAMAP-Rule" id="MF_01322"/>
    </source>
</evidence>